<reference key="1">
    <citation type="submission" date="2008-07" db="EMBL/GenBank/DDBJ databases">
        <title>Complete sequence of Geobacter bemidjiensis BEM.</title>
        <authorList>
            <consortium name="US DOE Joint Genome Institute"/>
            <person name="Lucas S."/>
            <person name="Copeland A."/>
            <person name="Lapidus A."/>
            <person name="Glavina del Rio T."/>
            <person name="Dalin E."/>
            <person name="Tice H."/>
            <person name="Bruce D."/>
            <person name="Goodwin L."/>
            <person name="Pitluck S."/>
            <person name="Kiss H."/>
            <person name="Brettin T."/>
            <person name="Detter J.C."/>
            <person name="Han C."/>
            <person name="Kuske C.R."/>
            <person name="Schmutz J."/>
            <person name="Larimer F."/>
            <person name="Land M."/>
            <person name="Hauser L."/>
            <person name="Kyrpides N."/>
            <person name="Lykidis A."/>
            <person name="Lovley D."/>
            <person name="Richardson P."/>
        </authorList>
    </citation>
    <scope>NUCLEOTIDE SEQUENCE [LARGE SCALE GENOMIC DNA]</scope>
    <source>
        <strain>ATCC BAA-1014 / DSM 16622 / JCM 12645 / Bem</strain>
    </source>
</reference>
<name>ATP6_CITBB</name>
<dbReference type="EMBL" id="CP001124">
    <property type="protein sequence ID" value="ACH40923.1"/>
    <property type="molecule type" value="Genomic_DNA"/>
</dbReference>
<dbReference type="RefSeq" id="WP_012532357.1">
    <property type="nucleotide sequence ID" value="NC_011146.1"/>
</dbReference>
<dbReference type="SMR" id="B5EFG8"/>
<dbReference type="STRING" id="404380.Gbem_3931"/>
<dbReference type="KEGG" id="gbm:Gbem_3931"/>
<dbReference type="eggNOG" id="COG0356">
    <property type="taxonomic scope" value="Bacteria"/>
</dbReference>
<dbReference type="HOGENOM" id="CLU_041018_2_2_7"/>
<dbReference type="OrthoDB" id="9789241at2"/>
<dbReference type="Proteomes" id="UP000008825">
    <property type="component" value="Chromosome"/>
</dbReference>
<dbReference type="GO" id="GO:0005886">
    <property type="term" value="C:plasma membrane"/>
    <property type="evidence" value="ECO:0007669"/>
    <property type="project" value="UniProtKB-SubCell"/>
</dbReference>
<dbReference type="GO" id="GO:0045259">
    <property type="term" value="C:proton-transporting ATP synthase complex"/>
    <property type="evidence" value="ECO:0007669"/>
    <property type="project" value="UniProtKB-KW"/>
</dbReference>
<dbReference type="GO" id="GO:0046933">
    <property type="term" value="F:proton-transporting ATP synthase activity, rotational mechanism"/>
    <property type="evidence" value="ECO:0007669"/>
    <property type="project" value="UniProtKB-UniRule"/>
</dbReference>
<dbReference type="GO" id="GO:0042777">
    <property type="term" value="P:proton motive force-driven plasma membrane ATP synthesis"/>
    <property type="evidence" value="ECO:0007669"/>
    <property type="project" value="TreeGrafter"/>
</dbReference>
<dbReference type="CDD" id="cd00310">
    <property type="entry name" value="ATP-synt_Fo_a_6"/>
    <property type="match status" value="1"/>
</dbReference>
<dbReference type="FunFam" id="1.20.120.220:FF:000006">
    <property type="entry name" value="ATP synthase subunit a"/>
    <property type="match status" value="1"/>
</dbReference>
<dbReference type="Gene3D" id="1.20.120.220">
    <property type="entry name" value="ATP synthase, F0 complex, subunit A"/>
    <property type="match status" value="1"/>
</dbReference>
<dbReference type="HAMAP" id="MF_01393">
    <property type="entry name" value="ATP_synth_a_bact"/>
    <property type="match status" value="1"/>
</dbReference>
<dbReference type="InterPro" id="IPR045082">
    <property type="entry name" value="ATP_syn_F0_a_bact/chloroplast"/>
</dbReference>
<dbReference type="InterPro" id="IPR000568">
    <property type="entry name" value="ATP_synth_F0_asu"/>
</dbReference>
<dbReference type="InterPro" id="IPR023011">
    <property type="entry name" value="ATP_synth_F0_asu_AS"/>
</dbReference>
<dbReference type="InterPro" id="IPR035908">
    <property type="entry name" value="F0_ATP_A_sf"/>
</dbReference>
<dbReference type="NCBIfam" id="TIGR01131">
    <property type="entry name" value="ATP_synt_6_or_A"/>
    <property type="match status" value="1"/>
</dbReference>
<dbReference type="PANTHER" id="PTHR42823">
    <property type="entry name" value="ATP SYNTHASE SUBUNIT A, CHLOROPLASTIC"/>
    <property type="match status" value="1"/>
</dbReference>
<dbReference type="PANTHER" id="PTHR42823:SF3">
    <property type="entry name" value="ATP SYNTHASE SUBUNIT A, CHLOROPLASTIC"/>
    <property type="match status" value="1"/>
</dbReference>
<dbReference type="Pfam" id="PF00119">
    <property type="entry name" value="ATP-synt_A"/>
    <property type="match status" value="1"/>
</dbReference>
<dbReference type="PRINTS" id="PR00123">
    <property type="entry name" value="ATPASEA"/>
</dbReference>
<dbReference type="SUPFAM" id="SSF81336">
    <property type="entry name" value="F1F0 ATP synthase subunit A"/>
    <property type="match status" value="1"/>
</dbReference>
<dbReference type="PROSITE" id="PS00449">
    <property type="entry name" value="ATPASE_A"/>
    <property type="match status" value="1"/>
</dbReference>
<feature type="chain" id="PRO_0000362310" description="ATP synthase subunit a">
    <location>
        <begin position="1"/>
        <end position="229"/>
    </location>
</feature>
<feature type="transmembrane region" description="Helical" evidence="1">
    <location>
        <begin position="25"/>
        <end position="45"/>
    </location>
</feature>
<feature type="transmembrane region" description="Helical" evidence="1">
    <location>
        <begin position="82"/>
        <end position="102"/>
    </location>
</feature>
<feature type="transmembrane region" description="Helical" evidence="1">
    <location>
        <begin position="104"/>
        <end position="124"/>
    </location>
</feature>
<feature type="transmembrane region" description="Helical" evidence="1">
    <location>
        <begin position="142"/>
        <end position="162"/>
    </location>
</feature>
<feature type="transmembrane region" description="Helical" evidence="1">
    <location>
        <begin position="181"/>
        <end position="201"/>
    </location>
</feature>
<feature type="transmembrane region" description="Helical" evidence="1">
    <location>
        <begin position="202"/>
        <end position="222"/>
    </location>
</feature>
<organism>
    <name type="scientific">Citrifermentans bemidjiense (strain ATCC BAA-1014 / DSM 16622 / JCM 12645 / Bem)</name>
    <name type="common">Geobacter bemidjiensis</name>
    <dbReference type="NCBI Taxonomy" id="404380"/>
    <lineage>
        <taxon>Bacteria</taxon>
        <taxon>Pseudomonadati</taxon>
        <taxon>Thermodesulfobacteriota</taxon>
        <taxon>Desulfuromonadia</taxon>
        <taxon>Geobacterales</taxon>
        <taxon>Geobacteraceae</taxon>
        <taxon>Citrifermentans</taxon>
    </lineage>
</organism>
<keyword id="KW-0066">ATP synthesis</keyword>
<keyword id="KW-0997">Cell inner membrane</keyword>
<keyword id="KW-1003">Cell membrane</keyword>
<keyword id="KW-0138">CF(0)</keyword>
<keyword id="KW-0375">Hydrogen ion transport</keyword>
<keyword id="KW-0406">Ion transport</keyword>
<keyword id="KW-0472">Membrane</keyword>
<keyword id="KW-1185">Reference proteome</keyword>
<keyword id="KW-0812">Transmembrane</keyword>
<keyword id="KW-1133">Transmembrane helix</keyword>
<keyword id="KW-0813">Transport</keyword>
<proteinExistence type="inferred from homology"/>
<accession>B5EFG8</accession>
<sequence>MVHPYLFLNFFRELLHPLGFSEAGADAVVYTWLIMIGLVVLSIAATKRLQAVPSGLQNFMEVIVGGIENMLVETMGEHGKPFFPLVATLALFILVSNLIGLVPGFFPPTANINTTAACAVVVFVTTHIVGVKHHGAGYIKHFLGPIAWLAPMMFFIEVIGHLSRVISLTLRLFGNMNGHELVLIIFFGLAPFIVPLPMMLMGVLVSFIQAFVFMLLAMIYIQGSLEHAH</sequence>
<gene>
    <name evidence="1" type="primary">atpB</name>
    <name type="ordered locus">Gbem_3931</name>
</gene>
<evidence type="ECO:0000255" key="1">
    <source>
        <dbReference type="HAMAP-Rule" id="MF_01393"/>
    </source>
</evidence>
<protein>
    <recommendedName>
        <fullName evidence="1">ATP synthase subunit a</fullName>
    </recommendedName>
    <alternativeName>
        <fullName evidence="1">ATP synthase F0 sector subunit a</fullName>
    </alternativeName>
    <alternativeName>
        <fullName evidence="1">F-ATPase subunit 6</fullName>
    </alternativeName>
</protein>
<comment type="function">
    <text evidence="1">Key component of the proton channel; it plays a direct role in the translocation of protons across the membrane.</text>
</comment>
<comment type="subunit">
    <text evidence="1">F-type ATPases have 2 components, CF(1) - the catalytic core - and CF(0) - the membrane proton channel. CF(1) has five subunits: alpha(3), beta(3), gamma(1), delta(1), epsilon(1). CF(0) has three main subunits: a(1), b(2) and c(9-12). The alpha and beta chains form an alternating ring which encloses part of the gamma chain. CF(1) is attached to CF(0) by a central stalk formed by the gamma and epsilon chains, while a peripheral stalk is formed by the delta and b chains.</text>
</comment>
<comment type="subcellular location">
    <subcellularLocation>
        <location evidence="1">Cell inner membrane</location>
        <topology evidence="1">Multi-pass membrane protein</topology>
    </subcellularLocation>
</comment>
<comment type="similarity">
    <text evidence="1">Belongs to the ATPase A chain family.</text>
</comment>